<organism>
    <name type="scientific">Thermoanaerobacter pseudethanolicus (strain ATCC 33223 / 39E)</name>
    <name type="common">Clostridium thermohydrosulfuricum</name>
    <dbReference type="NCBI Taxonomy" id="340099"/>
    <lineage>
        <taxon>Bacteria</taxon>
        <taxon>Bacillati</taxon>
        <taxon>Bacillota</taxon>
        <taxon>Clostridia</taxon>
        <taxon>Thermoanaerobacterales</taxon>
        <taxon>Thermoanaerobacteraceae</taxon>
        <taxon>Thermoanaerobacter</taxon>
    </lineage>
</organism>
<comment type="function">
    <text evidence="1">Catalyzes the pyruvoyl-dependent decarboxylation of aspartate to produce beta-alanine.</text>
</comment>
<comment type="catalytic activity">
    <reaction evidence="1">
        <text>L-aspartate + H(+) = beta-alanine + CO2</text>
        <dbReference type="Rhea" id="RHEA:19497"/>
        <dbReference type="ChEBI" id="CHEBI:15378"/>
        <dbReference type="ChEBI" id="CHEBI:16526"/>
        <dbReference type="ChEBI" id="CHEBI:29991"/>
        <dbReference type="ChEBI" id="CHEBI:57966"/>
        <dbReference type="EC" id="4.1.1.11"/>
    </reaction>
</comment>
<comment type="cofactor">
    <cofactor evidence="1">
        <name>pyruvate</name>
        <dbReference type="ChEBI" id="CHEBI:15361"/>
    </cofactor>
    <text evidence="1">Binds 1 pyruvoyl group covalently per subunit.</text>
</comment>
<comment type="pathway">
    <text evidence="1">Cofactor biosynthesis; (R)-pantothenate biosynthesis; beta-alanine from L-aspartate: step 1/1.</text>
</comment>
<comment type="subunit">
    <text evidence="1">Heterooctamer of four alpha and four beta subunits.</text>
</comment>
<comment type="subcellular location">
    <subcellularLocation>
        <location evidence="1">Cytoplasm</location>
    </subcellularLocation>
</comment>
<comment type="PTM">
    <text evidence="1">Is synthesized initially as an inactive proenzyme, which is activated by self-cleavage at a specific serine bond to produce a beta-subunit with a hydroxyl group at its C-terminus and an alpha-subunit with a pyruvoyl group at its N-terminus.</text>
</comment>
<comment type="similarity">
    <text evidence="1">Belongs to the PanD family.</text>
</comment>
<gene>
    <name evidence="1" type="primary">panD</name>
    <name type="ordered locus">Teth39_1810</name>
</gene>
<protein>
    <recommendedName>
        <fullName evidence="1">Aspartate 1-decarboxylase</fullName>
        <ecNumber evidence="1">4.1.1.11</ecNumber>
    </recommendedName>
    <alternativeName>
        <fullName evidence="1">Aspartate alpha-decarboxylase</fullName>
    </alternativeName>
    <component>
        <recommendedName>
            <fullName evidence="1">Aspartate 1-decarboxylase beta chain</fullName>
        </recommendedName>
    </component>
    <component>
        <recommendedName>
            <fullName evidence="1">Aspartate 1-decarboxylase alpha chain</fullName>
        </recommendedName>
    </component>
</protein>
<feature type="chain" id="PRO_1000192049" description="Aspartate 1-decarboxylase beta chain" evidence="1">
    <location>
        <begin position="1"/>
        <end position="24"/>
    </location>
</feature>
<feature type="chain" id="PRO_1000192050" description="Aspartate 1-decarboxylase alpha chain" evidence="1">
    <location>
        <begin position="25"/>
        <end position="117"/>
    </location>
</feature>
<feature type="active site" description="Schiff-base intermediate with substrate; via pyruvic acid" evidence="1">
    <location>
        <position position="25"/>
    </location>
</feature>
<feature type="active site" description="Proton donor" evidence="1">
    <location>
        <position position="58"/>
    </location>
</feature>
<feature type="binding site" evidence="1">
    <location>
        <position position="57"/>
    </location>
    <ligand>
        <name>substrate</name>
    </ligand>
</feature>
<feature type="binding site" evidence="1">
    <location>
        <begin position="73"/>
        <end position="75"/>
    </location>
    <ligand>
        <name>substrate</name>
    </ligand>
</feature>
<feature type="modified residue" description="Pyruvic acid (Ser)" evidence="1">
    <location>
        <position position="25"/>
    </location>
</feature>
<keyword id="KW-0068">Autocatalytic cleavage</keyword>
<keyword id="KW-0963">Cytoplasm</keyword>
<keyword id="KW-0210">Decarboxylase</keyword>
<keyword id="KW-0456">Lyase</keyword>
<keyword id="KW-0566">Pantothenate biosynthesis</keyword>
<keyword id="KW-0670">Pyruvate</keyword>
<keyword id="KW-1185">Reference proteome</keyword>
<keyword id="KW-0704">Schiff base</keyword>
<keyword id="KW-0865">Zymogen</keyword>
<accession>B0KC92</accession>
<reference key="1">
    <citation type="submission" date="2008-01" db="EMBL/GenBank/DDBJ databases">
        <title>Complete sequence of Thermoanaerobacter pseudethanolicus 39E.</title>
        <authorList>
            <person name="Copeland A."/>
            <person name="Lucas S."/>
            <person name="Lapidus A."/>
            <person name="Barry K."/>
            <person name="Glavina del Rio T."/>
            <person name="Dalin E."/>
            <person name="Tice H."/>
            <person name="Pitluck S."/>
            <person name="Bruce D."/>
            <person name="Goodwin L."/>
            <person name="Saunders E."/>
            <person name="Brettin T."/>
            <person name="Detter J.C."/>
            <person name="Han C."/>
            <person name="Schmutz J."/>
            <person name="Larimer F."/>
            <person name="Land M."/>
            <person name="Hauser L."/>
            <person name="Kyrpides N."/>
            <person name="Lykidis A."/>
            <person name="Hemme C."/>
            <person name="Fields M.W."/>
            <person name="He Z."/>
            <person name="Zhou J."/>
            <person name="Richardson P."/>
        </authorList>
    </citation>
    <scope>NUCLEOTIDE SEQUENCE [LARGE SCALE GENOMIC DNA]</scope>
    <source>
        <strain>ATCC 33223 / DSM 2355 / 39E</strain>
    </source>
</reference>
<dbReference type="EC" id="4.1.1.11" evidence="1"/>
<dbReference type="EMBL" id="CP000924">
    <property type="protein sequence ID" value="ABY95446.1"/>
    <property type="molecule type" value="Genomic_DNA"/>
</dbReference>
<dbReference type="RefSeq" id="WP_009051764.1">
    <property type="nucleotide sequence ID" value="NC_010321.1"/>
</dbReference>
<dbReference type="SMR" id="B0KC92"/>
<dbReference type="STRING" id="340099.Teth39_1810"/>
<dbReference type="KEGG" id="tpd:Teth39_1810"/>
<dbReference type="eggNOG" id="COG0853">
    <property type="taxonomic scope" value="Bacteria"/>
</dbReference>
<dbReference type="HOGENOM" id="CLU_115305_2_0_9"/>
<dbReference type="UniPathway" id="UPA00028">
    <property type="reaction ID" value="UER00002"/>
</dbReference>
<dbReference type="Proteomes" id="UP000002156">
    <property type="component" value="Chromosome"/>
</dbReference>
<dbReference type="GO" id="GO:0005829">
    <property type="term" value="C:cytosol"/>
    <property type="evidence" value="ECO:0007669"/>
    <property type="project" value="TreeGrafter"/>
</dbReference>
<dbReference type="GO" id="GO:0004068">
    <property type="term" value="F:aspartate 1-decarboxylase activity"/>
    <property type="evidence" value="ECO:0007669"/>
    <property type="project" value="UniProtKB-UniRule"/>
</dbReference>
<dbReference type="GO" id="GO:0006523">
    <property type="term" value="P:alanine biosynthetic process"/>
    <property type="evidence" value="ECO:0007669"/>
    <property type="project" value="InterPro"/>
</dbReference>
<dbReference type="GO" id="GO:0015940">
    <property type="term" value="P:pantothenate biosynthetic process"/>
    <property type="evidence" value="ECO:0007669"/>
    <property type="project" value="UniProtKB-UniRule"/>
</dbReference>
<dbReference type="CDD" id="cd06919">
    <property type="entry name" value="Asp_decarbox"/>
    <property type="match status" value="1"/>
</dbReference>
<dbReference type="Gene3D" id="2.40.40.20">
    <property type="match status" value="1"/>
</dbReference>
<dbReference type="HAMAP" id="MF_00446">
    <property type="entry name" value="PanD"/>
    <property type="match status" value="1"/>
</dbReference>
<dbReference type="InterPro" id="IPR009010">
    <property type="entry name" value="Asp_de-COase-like_dom_sf"/>
</dbReference>
<dbReference type="InterPro" id="IPR003190">
    <property type="entry name" value="Asp_decarbox"/>
</dbReference>
<dbReference type="NCBIfam" id="TIGR00223">
    <property type="entry name" value="panD"/>
    <property type="match status" value="1"/>
</dbReference>
<dbReference type="PANTHER" id="PTHR21012">
    <property type="entry name" value="ASPARTATE 1-DECARBOXYLASE"/>
    <property type="match status" value="1"/>
</dbReference>
<dbReference type="PANTHER" id="PTHR21012:SF0">
    <property type="entry name" value="ASPARTATE 1-DECARBOXYLASE"/>
    <property type="match status" value="1"/>
</dbReference>
<dbReference type="Pfam" id="PF02261">
    <property type="entry name" value="Asp_decarbox"/>
    <property type="match status" value="1"/>
</dbReference>
<dbReference type="PIRSF" id="PIRSF006246">
    <property type="entry name" value="Asp_decarbox"/>
    <property type="match status" value="1"/>
</dbReference>
<dbReference type="SUPFAM" id="SSF50692">
    <property type="entry name" value="ADC-like"/>
    <property type="match status" value="1"/>
</dbReference>
<sequence>MQRFMMKSKIHRAIVTDANLNYQGSITIDKNLMELADILPNEKVQVLNINNGARFDTYAIEGERGSGTICINGAAARLCQVGDIIIIISYAIMDDEEAKNYKPKVIFVDENNKPVNM</sequence>
<proteinExistence type="inferred from homology"/>
<name>PAND_THEP3</name>
<evidence type="ECO:0000255" key="1">
    <source>
        <dbReference type="HAMAP-Rule" id="MF_00446"/>
    </source>
</evidence>